<reference key="1">
    <citation type="journal article" date="2010" name="BMC Genomics">
        <title>A genomic perspective on the potential of Actinobacillus succinogenes for industrial succinate production.</title>
        <authorList>
            <person name="McKinlay J.B."/>
            <person name="Laivenieks M."/>
            <person name="Schindler B.D."/>
            <person name="McKinlay A.A."/>
            <person name="Siddaramappa S."/>
            <person name="Challacombe J.F."/>
            <person name="Lowry S.R."/>
            <person name="Clum A."/>
            <person name="Lapidus A.L."/>
            <person name="Burkhart K.B."/>
            <person name="Harkins V."/>
            <person name="Vieille C."/>
        </authorList>
    </citation>
    <scope>NUCLEOTIDE SEQUENCE [LARGE SCALE GENOMIC DNA]</scope>
    <source>
        <strain>ATCC 55618 / DSM 22257 / CCUG 43843 / 130Z</strain>
    </source>
</reference>
<accession>A6VLV3</accession>
<protein>
    <recommendedName>
        <fullName evidence="1">UPF0246 protein Asuc_0575</fullName>
    </recommendedName>
</protein>
<feature type="chain" id="PRO_1000072695" description="UPF0246 protein Asuc_0575">
    <location>
        <begin position="1"/>
        <end position="258"/>
    </location>
</feature>
<sequence length="258" mass="29352">MLAIISPAKTLDYQSAVPKLAVTQPLLTDYSQQLIDVCRQLTPAEIGSLMSVSDKLAGLNAARFADWQKEHNEQNARAAIYAFRGDVYTGLDADSLTAEDIQFAQSHLRMLSGLYGLLRPLDLMQPYRLEMSTKLATAKGKDLYQFWGEIITESLQNALDEQGDDVLINLASDEYYKVVKPSKLQARIVKPVFLDHKNGKYKVISFYAKKARGLMSRYLITQRINRIEQLKHFNLGGYQFDDSVSTEREWVFKRDISE</sequence>
<dbReference type="EMBL" id="CP000746">
    <property type="protein sequence ID" value="ABR73950.1"/>
    <property type="molecule type" value="Genomic_DNA"/>
</dbReference>
<dbReference type="RefSeq" id="WP_012072330.1">
    <property type="nucleotide sequence ID" value="NC_009655.1"/>
</dbReference>
<dbReference type="SMR" id="A6VLV3"/>
<dbReference type="STRING" id="339671.Asuc_0575"/>
<dbReference type="KEGG" id="asu:Asuc_0575"/>
<dbReference type="eggNOG" id="COG3022">
    <property type="taxonomic scope" value="Bacteria"/>
</dbReference>
<dbReference type="HOGENOM" id="CLU_061989_0_0_6"/>
<dbReference type="OrthoDB" id="9777133at2"/>
<dbReference type="Proteomes" id="UP000001114">
    <property type="component" value="Chromosome"/>
</dbReference>
<dbReference type="GO" id="GO:0005829">
    <property type="term" value="C:cytosol"/>
    <property type="evidence" value="ECO:0007669"/>
    <property type="project" value="TreeGrafter"/>
</dbReference>
<dbReference type="GO" id="GO:0033194">
    <property type="term" value="P:response to hydroperoxide"/>
    <property type="evidence" value="ECO:0007669"/>
    <property type="project" value="TreeGrafter"/>
</dbReference>
<dbReference type="HAMAP" id="MF_00652">
    <property type="entry name" value="UPF0246"/>
    <property type="match status" value="1"/>
</dbReference>
<dbReference type="InterPro" id="IPR005583">
    <property type="entry name" value="YaaA"/>
</dbReference>
<dbReference type="NCBIfam" id="NF002541">
    <property type="entry name" value="PRK02101.1-1"/>
    <property type="match status" value="1"/>
</dbReference>
<dbReference type="NCBIfam" id="NF002542">
    <property type="entry name" value="PRK02101.1-3"/>
    <property type="match status" value="1"/>
</dbReference>
<dbReference type="PANTHER" id="PTHR30283:SF4">
    <property type="entry name" value="PEROXIDE STRESS RESISTANCE PROTEIN YAAA"/>
    <property type="match status" value="1"/>
</dbReference>
<dbReference type="PANTHER" id="PTHR30283">
    <property type="entry name" value="PEROXIDE STRESS RESPONSE PROTEIN YAAA"/>
    <property type="match status" value="1"/>
</dbReference>
<dbReference type="Pfam" id="PF03883">
    <property type="entry name" value="H2O2_YaaD"/>
    <property type="match status" value="1"/>
</dbReference>
<name>Y575_ACTSZ</name>
<comment type="similarity">
    <text evidence="1">Belongs to the UPF0246 family.</text>
</comment>
<organism>
    <name type="scientific">Actinobacillus succinogenes (strain ATCC 55618 / DSM 22257 / CCUG 43843 / 130Z)</name>
    <dbReference type="NCBI Taxonomy" id="339671"/>
    <lineage>
        <taxon>Bacteria</taxon>
        <taxon>Pseudomonadati</taxon>
        <taxon>Pseudomonadota</taxon>
        <taxon>Gammaproteobacteria</taxon>
        <taxon>Pasteurellales</taxon>
        <taxon>Pasteurellaceae</taxon>
        <taxon>Actinobacillus</taxon>
    </lineage>
</organism>
<proteinExistence type="inferred from homology"/>
<evidence type="ECO:0000255" key="1">
    <source>
        <dbReference type="HAMAP-Rule" id="MF_00652"/>
    </source>
</evidence>
<keyword id="KW-1185">Reference proteome</keyword>
<gene>
    <name type="ordered locus">Asuc_0575</name>
</gene>